<sequence>MSSELSETEKRKLIRERRQKKFSNGGASARLNRITGQAENSQLDTESPLDSKSSRETTPTVTKVDSNTEEMDELLENIATSPSNKVEKSQKKKEQATSPQETIDPELEIFKQLAENQQNDVSTPDLFSMLRSMKDNMAKSAATDTNPPLEPVDQQLLDYNNYLINNLKVWSIIFKWCFFLIPYLFALTRSEPISFLPEQFSNPSNFFMIFLSFEIVATSIYFQKLQNIEKSNKINGFQSNNKIVNLVSLIPEGVLPVPDIKGKVIMALQYWDVFSMFLTDICFVLVMMGLFKLI</sequence>
<dbReference type="EMBL" id="DS480484">
    <property type="protein sequence ID" value="EDO15059.1"/>
    <property type="molecule type" value="Genomic_DNA"/>
</dbReference>
<dbReference type="RefSeq" id="XP_001642917.1">
    <property type="nucleotide sequence ID" value="XM_001642867.1"/>
</dbReference>
<dbReference type="FunCoup" id="A7TRN7">
    <property type="interactions" value="68"/>
</dbReference>
<dbReference type="STRING" id="436907.A7TRN7"/>
<dbReference type="GeneID" id="5543101"/>
<dbReference type="KEGG" id="vpo:Kpol_411p4"/>
<dbReference type="eggNOG" id="ENOG502QW0H">
    <property type="taxonomic scope" value="Eukaryota"/>
</dbReference>
<dbReference type="HOGENOM" id="CLU_066477_0_0_1"/>
<dbReference type="InParanoid" id="A7TRN7"/>
<dbReference type="OMA" id="QYWDVLS"/>
<dbReference type="OrthoDB" id="4097053at2759"/>
<dbReference type="PhylomeDB" id="A7TRN7"/>
<dbReference type="Proteomes" id="UP000000267">
    <property type="component" value="Unassembled WGS sequence"/>
</dbReference>
<dbReference type="GO" id="GO:0005789">
    <property type="term" value="C:endoplasmic reticulum membrane"/>
    <property type="evidence" value="ECO:0007669"/>
    <property type="project" value="UniProtKB-SubCell"/>
</dbReference>
<dbReference type="GO" id="GO:0043529">
    <property type="term" value="C:GET complex"/>
    <property type="evidence" value="ECO:0007669"/>
    <property type="project" value="UniProtKB-UniRule"/>
</dbReference>
<dbReference type="GO" id="GO:0000139">
    <property type="term" value="C:Golgi membrane"/>
    <property type="evidence" value="ECO:0007669"/>
    <property type="project" value="UniProtKB-SubCell"/>
</dbReference>
<dbReference type="GO" id="GO:0032977">
    <property type="term" value="F:membrane insertase activity"/>
    <property type="evidence" value="ECO:0007669"/>
    <property type="project" value="EnsemblFungi"/>
</dbReference>
<dbReference type="GO" id="GO:0008320">
    <property type="term" value="F:protein transmembrane transporter activity"/>
    <property type="evidence" value="ECO:0007669"/>
    <property type="project" value="EnsemblFungi"/>
</dbReference>
<dbReference type="GO" id="GO:0043495">
    <property type="term" value="F:protein-membrane adaptor activity"/>
    <property type="evidence" value="ECO:0007669"/>
    <property type="project" value="EnsemblFungi"/>
</dbReference>
<dbReference type="GO" id="GO:0097051">
    <property type="term" value="P:establishment of protein localization to endoplasmic reticulum membrane"/>
    <property type="evidence" value="ECO:0007669"/>
    <property type="project" value="EnsemblFungi"/>
</dbReference>
<dbReference type="GO" id="GO:0000423">
    <property type="term" value="P:mitophagy"/>
    <property type="evidence" value="ECO:0007669"/>
    <property type="project" value="EnsemblFungi"/>
</dbReference>
<dbReference type="GO" id="GO:0006890">
    <property type="term" value="P:retrograde vesicle-mediated transport, Golgi to endoplasmic reticulum"/>
    <property type="evidence" value="ECO:0007669"/>
    <property type="project" value="EnsemblFungi"/>
</dbReference>
<dbReference type="GO" id="GO:0071816">
    <property type="term" value="P:tail-anchored membrane protein insertion into ER membrane"/>
    <property type="evidence" value="ECO:0007669"/>
    <property type="project" value="EnsemblFungi"/>
</dbReference>
<dbReference type="HAMAP" id="MF_03114">
    <property type="entry name" value="Get2"/>
    <property type="match status" value="1"/>
</dbReference>
<dbReference type="InterPro" id="IPR014802">
    <property type="entry name" value="GET2"/>
</dbReference>
<dbReference type="InterPro" id="IPR028143">
    <property type="entry name" value="Get2/sif1"/>
</dbReference>
<dbReference type="PANTHER" id="PTHR28263">
    <property type="entry name" value="GOLGI TO ER TRAFFIC PROTEIN 2"/>
    <property type="match status" value="1"/>
</dbReference>
<dbReference type="PANTHER" id="PTHR28263:SF1">
    <property type="entry name" value="GOLGI TO ER TRAFFIC PROTEIN 2"/>
    <property type="match status" value="1"/>
</dbReference>
<dbReference type="Pfam" id="PF08690">
    <property type="entry name" value="GET2"/>
    <property type="match status" value="1"/>
</dbReference>
<keyword id="KW-0256">Endoplasmic reticulum</keyword>
<keyword id="KW-0931">ER-Golgi transport</keyword>
<keyword id="KW-0333">Golgi apparatus</keyword>
<keyword id="KW-0472">Membrane</keyword>
<keyword id="KW-1185">Reference proteome</keyword>
<keyword id="KW-0812">Transmembrane</keyword>
<keyword id="KW-1133">Transmembrane helix</keyword>
<keyword id="KW-0813">Transport</keyword>
<protein>
    <recommendedName>
        <fullName evidence="1">Golgi to ER traffic protein 2</fullName>
    </recommendedName>
</protein>
<name>GET2_VANPO</name>
<evidence type="ECO:0000255" key="1">
    <source>
        <dbReference type="HAMAP-Rule" id="MF_03114"/>
    </source>
</evidence>
<evidence type="ECO:0000256" key="2">
    <source>
        <dbReference type="SAM" id="MobiDB-lite"/>
    </source>
</evidence>
<gene>
    <name evidence="1" type="primary">GET2</name>
    <name type="ORF">Kpol_411p4</name>
</gene>
<feature type="chain" id="PRO_0000388640" description="Golgi to ER traffic protein 2">
    <location>
        <begin position="1"/>
        <end position="294"/>
    </location>
</feature>
<feature type="topological domain" description="Cytoplasmic" evidence="1">
    <location>
        <begin position="1"/>
        <end position="166"/>
    </location>
</feature>
<feature type="transmembrane region" description="Helical" evidence="1">
    <location>
        <begin position="167"/>
        <end position="187"/>
    </location>
</feature>
<feature type="topological domain" description="Lumenal" evidence="1">
    <location>
        <begin position="188"/>
        <end position="205"/>
    </location>
</feature>
<feature type="transmembrane region" description="Helical" evidence="1">
    <location>
        <begin position="206"/>
        <end position="225"/>
    </location>
</feature>
<feature type="topological domain" description="Cytoplasmic" evidence="1">
    <location>
        <begin position="226"/>
        <end position="272"/>
    </location>
</feature>
<feature type="transmembrane region" description="Helical" evidence="1">
    <location>
        <begin position="273"/>
        <end position="293"/>
    </location>
</feature>
<feature type="topological domain" description="Lumenal" evidence="1">
    <location>
        <position position="294"/>
    </location>
</feature>
<feature type="region of interest" description="Disordered" evidence="2">
    <location>
        <begin position="1"/>
        <end position="104"/>
    </location>
</feature>
<feature type="compositionally biased region" description="Basic residues" evidence="2">
    <location>
        <begin position="12"/>
        <end position="21"/>
    </location>
</feature>
<feature type="compositionally biased region" description="Polar residues" evidence="2">
    <location>
        <begin position="34"/>
        <end position="65"/>
    </location>
</feature>
<feature type="compositionally biased region" description="Basic and acidic residues" evidence="2">
    <location>
        <begin position="85"/>
        <end position="95"/>
    </location>
</feature>
<reference key="1">
    <citation type="journal article" date="2007" name="Proc. Natl. Acad. Sci. U.S.A.">
        <title>Independent sorting-out of thousands of duplicated gene pairs in two yeast species descended from a whole-genome duplication.</title>
        <authorList>
            <person name="Scannell D.R."/>
            <person name="Frank A.C."/>
            <person name="Conant G.C."/>
            <person name="Byrne K.P."/>
            <person name="Woolfit M."/>
            <person name="Wolfe K.H."/>
        </authorList>
    </citation>
    <scope>NUCLEOTIDE SEQUENCE [LARGE SCALE GENOMIC DNA]</scope>
    <source>
        <strain>ATCC 22028 / DSM 70294 / BCRC 21397 / CBS 2163 / NBRC 10782 / NRRL Y-8283 / UCD 57-17</strain>
    </source>
</reference>
<accession>A7TRN7</accession>
<comment type="function">
    <text evidence="1">Required for the post-translational delivery of tail-anchored (TA) proteins to the endoplasmic reticulum. Together with GET1, acts as a membrane receptor for soluble GET3, which recognizes and selectively binds the transmembrane domain of TA proteins in the cytosol. The GET complex cooperates with the HDEL receptor ERD2 to mediate the ATP-dependent retrieval of resident ER proteins that contain a C-terminal H-D-E-L retention signal from the Golgi to the ER.</text>
</comment>
<comment type="subunit">
    <text evidence="1">Component of the Golgi to ER traffic (GET) complex, which is composed of GET1, GET2 and GET3. Within the complex, GET1 and GET2 form a heterotetramer which is stabilized by phosphatidylinositol binding and which binds to the GET3 homodimer.</text>
</comment>
<comment type="subcellular location">
    <subcellularLocation>
        <location evidence="1">Endoplasmic reticulum membrane</location>
        <topology evidence="1">Multi-pass membrane protein</topology>
    </subcellularLocation>
    <subcellularLocation>
        <location evidence="1">Golgi apparatus membrane</location>
        <topology evidence="1">Multi-pass membrane protein</topology>
    </subcellularLocation>
</comment>
<comment type="similarity">
    <text evidence="1">Belongs to the GET2 family.</text>
</comment>
<proteinExistence type="inferred from homology"/>
<organism>
    <name type="scientific">Vanderwaltozyma polyspora (strain ATCC 22028 / DSM 70294 / BCRC 21397 / CBS 2163 / NBRC 10782 / NRRL Y-8283 / UCD 57-17)</name>
    <name type="common">Kluyveromyces polysporus</name>
    <dbReference type="NCBI Taxonomy" id="436907"/>
    <lineage>
        <taxon>Eukaryota</taxon>
        <taxon>Fungi</taxon>
        <taxon>Dikarya</taxon>
        <taxon>Ascomycota</taxon>
        <taxon>Saccharomycotina</taxon>
        <taxon>Saccharomycetes</taxon>
        <taxon>Saccharomycetales</taxon>
        <taxon>Saccharomycetaceae</taxon>
        <taxon>Vanderwaltozyma</taxon>
    </lineage>
</organism>